<proteinExistence type="evidence at transcript level"/>
<keyword id="KW-0067">ATP-binding</keyword>
<keyword id="KW-0963">Cytoplasm</keyword>
<keyword id="KW-0460">Magnesium</keyword>
<keyword id="KW-0464">Manganese</keyword>
<keyword id="KW-0479">Metal-binding</keyword>
<keyword id="KW-0507">mRNA processing</keyword>
<keyword id="KW-0547">Nucleotide-binding</keyword>
<keyword id="KW-0548">Nucleotidyltransferase</keyword>
<keyword id="KW-0539">Nucleus</keyword>
<keyword id="KW-1185">Reference proteome</keyword>
<keyword id="KW-0808">Transferase</keyword>
<organism>
    <name type="scientific">Mus musculus</name>
    <name type="common">Mouse</name>
    <dbReference type="NCBI Taxonomy" id="10090"/>
    <lineage>
        <taxon>Eukaryota</taxon>
        <taxon>Metazoa</taxon>
        <taxon>Chordata</taxon>
        <taxon>Craniata</taxon>
        <taxon>Vertebrata</taxon>
        <taxon>Euteleostomi</taxon>
        <taxon>Mammalia</taxon>
        <taxon>Eutheria</taxon>
        <taxon>Euarchontoglires</taxon>
        <taxon>Glires</taxon>
        <taxon>Rodentia</taxon>
        <taxon>Myomorpha</taxon>
        <taxon>Muroidea</taxon>
        <taxon>Muridae</taxon>
        <taxon>Murinae</taxon>
        <taxon>Mus</taxon>
        <taxon>Mus</taxon>
    </lineage>
</organism>
<reference evidence="9" key="1">
    <citation type="journal article" date="2009" name="PLoS Biol.">
        <title>Lineage-specific biology revealed by a finished genome assembly of the mouse.</title>
        <authorList>
            <person name="Church D.M."/>
            <person name="Goodstadt L."/>
            <person name="Hillier L.W."/>
            <person name="Zody M.C."/>
            <person name="Goldstein S."/>
            <person name="She X."/>
            <person name="Bult C.J."/>
            <person name="Agarwala R."/>
            <person name="Cherry J.L."/>
            <person name="DiCuccio M."/>
            <person name="Hlavina W."/>
            <person name="Kapustin Y."/>
            <person name="Meric P."/>
            <person name="Maglott D."/>
            <person name="Birtle Z."/>
            <person name="Marques A.C."/>
            <person name="Graves T."/>
            <person name="Zhou S."/>
            <person name="Teague B."/>
            <person name="Potamousis K."/>
            <person name="Churas C."/>
            <person name="Place M."/>
            <person name="Herschleb J."/>
            <person name="Runnheim R."/>
            <person name="Forrest D."/>
            <person name="Amos-Landgraf J."/>
            <person name="Schwartz D.C."/>
            <person name="Cheng Z."/>
            <person name="Lindblad-Toh K."/>
            <person name="Eichler E.E."/>
            <person name="Ponting C.P."/>
        </authorList>
    </citation>
    <scope>NUCLEOTIDE SEQUENCE [LARGE SCALE GENOMIC DNA]</scope>
    <source>
        <strain evidence="9">C57BL/6J</strain>
    </source>
</reference>
<reference key="2">
    <citation type="submission" date="2005-07" db="EMBL/GenBank/DDBJ databases">
        <authorList>
            <person name="Mural R.J."/>
            <person name="Adams M.D."/>
            <person name="Myers E.W."/>
            <person name="Smith H.O."/>
            <person name="Venter J.C."/>
        </authorList>
    </citation>
    <scope>NUCLEOTIDE SEQUENCE [LARGE SCALE GENOMIC DNA]</scope>
</reference>
<reference key="3">
    <citation type="journal article" date="2004" name="Genome Res.">
        <title>The status, quality, and expansion of the NIH full-length cDNA project: the Mammalian Gene Collection (MGC).</title>
        <authorList>
            <consortium name="The MGC Project Team"/>
        </authorList>
    </citation>
    <scope>NUCLEOTIDE SEQUENCE [LARGE SCALE MRNA] OF 116-785</scope>
    <source>
        <strain>C57BL/6J</strain>
        <tissue>Brain</tissue>
    </source>
</reference>
<sequence length="785" mass="84326">MDPRVAWIQPEQKGPANALWMQIWETSQGVGRGGSGFASYFCLNSPALDTAAAPGAAGRAAPAAGGPGPAPAASSPPPAPGPAALPPALLTALGPAADSARRLHKSPSLSSSSSSSSSNAESGTESPGCSSSSSSSTSLGRAGSGRTFFSFADGAAHAHPGPRGSTPAGSPPQHQFHPGRRKRENKASTYGLNYLLSGSRAATLSGGGGPGAQAARPGTPWKSRAYSPGIQGLHEEIIDFYNFMSPCPEEAAMRREVVKRIETVVKDLWPTADVQIFGSFSTGLYLPTSDIDLVVFGKWERPPLQLLEQALRKHNVAEPCSIKVLDKATVPIIKLTDQETEVKVDISFNMETGVRAAEFIKNYMKKYSLLPYLILVLKQFLLQRDLNEVFTGGISSYSLILMAISFLQLHPRIDARRADENLGMLLVEFFELYGRNFNYLKTGIRIKEGGAYIAKEEIMKAMTSGYRPSMLCIEDPLLPGNDVGRSSYGAMQVKQVFDYAYIVLSHAVSPLARSYPNRDSESTLGRIIKVTQEVIDYRRWIKEKWGSRILPSPDLDNRIKIKERITTCNGEQMQSREPSSPYTQRLTLSLSSPQLLSSGSSASSVSSLSGSDIDSDTPPCTTPSVYQFSLQAPTTLMASLPTALPMPSSKPQPAASRTLIMTTNNQTRVTIPPPTLGVAPVPCRQAGVDGTTSLKAVHSVTSPAIPSASPNPLSSPHLYHKQHNGMKLSMKGSHNHTQGGGYSSVGSGAVRPPVGNRGHHQYNRTGWRRKKHAHTRDSLPVSLSR</sequence>
<name>PAPD7_MOUSE</name>
<gene>
    <name evidence="3" type="primary">Tent4a</name>
    <name evidence="8" type="synonym">Papd7</name>
    <name type="synonym">Pols</name>
</gene>
<protein>
    <recommendedName>
        <fullName evidence="7">Terminal nucleotidyltransferase 4A</fullName>
    </recommendedName>
    <alternativeName>
        <fullName>DNA polymerase sigma</fullName>
    </alternativeName>
    <alternativeName>
        <fullName>Non-canonical poly(A) RNA polymerase PAPD7</fullName>
        <ecNumber evidence="4">2.7.7.19</ecNumber>
    </alternativeName>
    <alternativeName>
        <fullName>PAP-associated domain-containing protein 7</fullName>
    </alternativeName>
    <alternativeName>
        <fullName>TRAMP-like complex polyadenylate polymerase</fullName>
    </alternativeName>
    <alternativeName>
        <fullName evidence="7">Terminal guanylyltransferase</fullName>
        <ecNumber evidence="3">2.7.7.-</ecNumber>
    </alternativeName>
</protein>
<accession>Q6PB75</accession>
<accession>A0A0G2JDV2</accession>
<accession>G3X948</accession>
<comment type="function">
    <text evidence="3">Terminal nucleotidyltransferase that catalyzes preferentially the transfer of ATP and GTP on RNA 3' poly(A) tail creating a heterogeneous 3' poly(A) tail leading to mRNAs stabilization by protecting mRNAs from active deadenylation (By similarity). Also functions as a catalytic subunit of a TRAMP-like complex which has a poly(A) RNA polymerase activity and is involved in a post-transcriptional quality control mechanism. Polyadenylation with short oligo(A) tails is required for the degradative activity of the exosome on several of its nuclear RNA substrates. Has no terminal uridylyltransferase activity, and does not play a role in replication-dependent histone mRNA degradation via uridylation (By similarity).</text>
</comment>
<comment type="catalytic activity">
    <reaction evidence="4">
        <text>RNA(n) + ATP = RNA(n)-3'-adenine ribonucleotide + diphosphate</text>
        <dbReference type="Rhea" id="RHEA:11332"/>
        <dbReference type="Rhea" id="RHEA-COMP:14527"/>
        <dbReference type="Rhea" id="RHEA-COMP:17347"/>
        <dbReference type="ChEBI" id="CHEBI:30616"/>
        <dbReference type="ChEBI" id="CHEBI:33019"/>
        <dbReference type="ChEBI" id="CHEBI:140395"/>
        <dbReference type="ChEBI" id="CHEBI:173115"/>
        <dbReference type="EC" id="2.7.7.19"/>
    </reaction>
</comment>
<comment type="cofactor">
    <cofactor evidence="2">
        <name>Mg(2+)</name>
        <dbReference type="ChEBI" id="CHEBI:18420"/>
    </cofactor>
    <cofactor evidence="2">
        <name>Mn(2+)</name>
        <dbReference type="ChEBI" id="CHEBI:29035"/>
    </cofactor>
</comment>
<comment type="subunit">
    <text>Component of a nuclear TRAMP-like complex, an ATP-dependent exosome regulatory complex consisting of a helicase (MTREX), an oligadenylate polymerase (TENT4B or TENT4A), and a substrate specific RNA-binding factor (ZCCHC7 or ZCCHC8). Several TRAMP-like complexes exist with specific compositions and are associated with nuclear, or nucleolar RNA exosomes.</text>
</comment>
<comment type="subcellular location">
    <subcellularLocation>
        <location evidence="1">Cytoplasm</location>
    </subcellularLocation>
    <subcellularLocation>
        <location evidence="1">Nucleus</location>
        <location evidence="1">Nucleoplasm</location>
    </subcellularLocation>
    <text evidence="1">Excluded from nucleolus, weak staining detected in the cytoplasm.</text>
</comment>
<comment type="similarity">
    <text evidence="7">Belongs to the DNA polymerase type-B-like family.</text>
</comment>
<comment type="caution">
    <text evidence="7">Was originally thought to have DNA polymerase activity.</text>
</comment>
<comment type="sequence caution" evidence="7">
    <conflict type="erroneous initiation">
        <sequence resource="EMBL-CDS" id="AAH59846"/>
    </conflict>
    <text>Truncated N-terminus.</text>
</comment>
<comment type="sequence caution" evidence="7">
    <conflict type="erroneous gene model prediction">
        <sequence resource="EMBL-CDS" id="EDL37014"/>
    </conflict>
</comment>
<feature type="chain" id="PRO_0000120309" description="Terminal nucleotidyltransferase 4A">
    <location>
        <begin position="1"/>
        <end position="785"/>
    </location>
</feature>
<feature type="domain" description="PAP-associated" evidence="5">
    <location>
        <begin position="421"/>
        <end position="480"/>
    </location>
</feature>
<feature type="region of interest" description="Disordered" evidence="6">
    <location>
        <begin position="56"/>
        <end position="184"/>
    </location>
</feature>
<feature type="region of interest" description="Disordered" evidence="6">
    <location>
        <begin position="593"/>
        <end position="625"/>
    </location>
</feature>
<feature type="region of interest" description="Disordered" evidence="6">
    <location>
        <begin position="731"/>
        <end position="785"/>
    </location>
</feature>
<feature type="compositionally biased region" description="Pro residues" evidence="6">
    <location>
        <begin position="68"/>
        <end position="85"/>
    </location>
</feature>
<feature type="compositionally biased region" description="Low complexity" evidence="6">
    <location>
        <begin position="86"/>
        <end position="98"/>
    </location>
</feature>
<feature type="compositionally biased region" description="Low complexity" evidence="6">
    <location>
        <begin position="106"/>
        <end position="145"/>
    </location>
</feature>
<feature type="compositionally biased region" description="Low complexity" evidence="6">
    <location>
        <begin position="593"/>
        <end position="611"/>
    </location>
</feature>
<feature type="compositionally biased region" description="Basic residues" evidence="6">
    <location>
        <begin position="757"/>
        <end position="774"/>
    </location>
</feature>
<feature type="binding site" evidence="2">
    <location>
        <position position="290"/>
    </location>
    <ligand>
        <name>Mg(2+)</name>
        <dbReference type="ChEBI" id="CHEBI:18420"/>
        <note>catalytic</note>
    </ligand>
</feature>
<feature type="binding site" evidence="2">
    <location>
        <position position="292"/>
    </location>
    <ligand>
        <name>Mg(2+)</name>
        <dbReference type="ChEBI" id="CHEBI:18420"/>
        <note>catalytic</note>
    </ligand>
</feature>
<feature type="binding site" evidence="2">
    <location>
        <position position="353"/>
    </location>
    <ligand>
        <name>ATP</name>
        <dbReference type="ChEBI" id="CHEBI:30616"/>
    </ligand>
</feature>
<feature type="binding site" evidence="2">
    <location>
        <position position="378"/>
    </location>
    <ligand>
        <name>ATP</name>
        <dbReference type="ChEBI" id="CHEBI:30616"/>
    </ligand>
</feature>
<feature type="binding site" evidence="2">
    <location>
        <position position="396"/>
    </location>
    <ligand>
        <name>ATP</name>
        <dbReference type="ChEBI" id="CHEBI:30616"/>
    </ligand>
</feature>
<feature type="binding site" evidence="2">
    <location>
        <position position="397"/>
    </location>
    <ligand>
        <name>ATP</name>
        <dbReference type="ChEBI" id="CHEBI:30616"/>
    </ligand>
</feature>
<feature type="binding site" evidence="2">
    <location>
        <position position="481"/>
    </location>
    <ligand>
        <name>ATP</name>
        <dbReference type="ChEBI" id="CHEBI:30616"/>
    </ligand>
</feature>
<feature type="binding site" evidence="2">
    <location>
        <position position="485"/>
    </location>
    <ligand>
        <name>ATP</name>
        <dbReference type="ChEBI" id="CHEBI:30616"/>
    </ligand>
</feature>
<dbReference type="EC" id="2.7.7.19" evidence="4"/>
<dbReference type="EC" id="2.7.7.-" evidence="3"/>
<dbReference type="EMBL" id="AC122484">
    <property type="status" value="NOT_ANNOTATED_CDS"/>
    <property type="molecule type" value="Genomic_DNA"/>
</dbReference>
<dbReference type="EMBL" id="CH466563">
    <property type="protein sequence ID" value="EDL37014.1"/>
    <property type="status" value="ALT_SEQ"/>
    <property type="molecule type" value="Genomic_DNA"/>
</dbReference>
<dbReference type="EMBL" id="BC059846">
    <property type="protein sequence ID" value="AAH59846.1"/>
    <property type="status" value="ALT_INIT"/>
    <property type="molecule type" value="mRNA"/>
</dbReference>
<dbReference type="CCDS" id="CCDS26622.1"/>
<dbReference type="RefSeq" id="NP_941002.3">
    <property type="nucleotide sequence ID" value="NM_198600.3"/>
</dbReference>
<dbReference type="RefSeq" id="XP_006517248.1">
    <property type="nucleotide sequence ID" value="XM_006517185.1"/>
</dbReference>
<dbReference type="SMR" id="Q6PB75"/>
<dbReference type="BioGRID" id="229130">
    <property type="interactions" value="1"/>
</dbReference>
<dbReference type="FunCoup" id="Q6PB75">
    <property type="interactions" value="3117"/>
</dbReference>
<dbReference type="STRING" id="10090.ENSMUSP00000040757"/>
<dbReference type="iPTMnet" id="Q6PB75"/>
<dbReference type="PhosphoSitePlus" id="Q6PB75"/>
<dbReference type="PaxDb" id="10090-ENSMUSP00000040757"/>
<dbReference type="ProteomicsDB" id="294328"/>
<dbReference type="ProteomicsDB" id="363383"/>
<dbReference type="Antibodypedia" id="22404">
    <property type="antibodies" value="150 antibodies from 22 providers"/>
</dbReference>
<dbReference type="DNASU" id="210106"/>
<dbReference type="Ensembl" id="ENSMUST00000198607.5">
    <property type="protein sequence ID" value="ENSMUSP00000142516.2"/>
    <property type="gene ID" value="ENSMUSG00000034575.15"/>
</dbReference>
<dbReference type="GeneID" id="210106"/>
<dbReference type="KEGG" id="mmu:210106"/>
<dbReference type="UCSC" id="uc007rch.2">
    <property type="organism name" value="mouse"/>
</dbReference>
<dbReference type="AGR" id="MGI:2682295"/>
<dbReference type="CTD" id="11044"/>
<dbReference type="MGI" id="MGI:2682295">
    <property type="gene designation" value="Tent4a"/>
</dbReference>
<dbReference type="VEuPathDB" id="HostDB:ENSMUSG00000034575"/>
<dbReference type="eggNOG" id="KOG1906">
    <property type="taxonomic scope" value="Eukaryota"/>
</dbReference>
<dbReference type="GeneTree" id="ENSGT00940000157811"/>
<dbReference type="HOGENOM" id="CLU_013572_3_0_1"/>
<dbReference type="InParanoid" id="Q6PB75"/>
<dbReference type="OMA" id="KWGSRVH"/>
<dbReference type="OrthoDB" id="273917at2759"/>
<dbReference type="PhylomeDB" id="Q6PB75"/>
<dbReference type="TreeFam" id="TF313939"/>
<dbReference type="BioGRID-ORCS" id="210106">
    <property type="hits" value="4 hits in 79 CRISPR screens"/>
</dbReference>
<dbReference type="ChiTaRS" id="Papd7">
    <property type="organism name" value="mouse"/>
</dbReference>
<dbReference type="PRO" id="PR:Q6PB75"/>
<dbReference type="Proteomes" id="UP000000589">
    <property type="component" value="Chromosome 13"/>
</dbReference>
<dbReference type="RNAct" id="Q6PB75">
    <property type="molecule type" value="protein"/>
</dbReference>
<dbReference type="Bgee" id="ENSMUSG00000034575">
    <property type="expression patterns" value="Expressed in animal zygote and 229 other cell types or tissues"/>
</dbReference>
<dbReference type="ExpressionAtlas" id="Q6PB75">
    <property type="expression patterns" value="baseline and differential"/>
</dbReference>
<dbReference type="GO" id="GO:0005794">
    <property type="term" value="C:Golgi apparatus"/>
    <property type="evidence" value="ECO:0007669"/>
    <property type="project" value="Ensembl"/>
</dbReference>
<dbReference type="GO" id="GO:0031965">
    <property type="term" value="C:nuclear membrane"/>
    <property type="evidence" value="ECO:0007669"/>
    <property type="project" value="Ensembl"/>
</dbReference>
<dbReference type="GO" id="GO:0005654">
    <property type="term" value="C:nucleoplasm"/>
    <property type="evidence" value="ECO:0007669"/>
    <property type="project" value="UniProtKB-SubCell"/>
</dbReference>
<dbReference type="GO" id="GO:0005524">
    <property type="term" value="F:ATP binding"/>
    <property type="evidence" value="ECO:0007669"/>
    <property type="project" value="UniProtKB-KW"/>
</dbReference>
<dbReference type="GO" id="GO:0070568">
    <property type="term" value="F:guanylyltransferase activity"/>
    <property type="evidence" value="ECO:0000250"/>
    <property type="project" value="UniProtKB"/>
</dbReference>
<dbReference type="GO" id="GO:0046872">
    <property type="term" value="F:metal ion binding"/>
    <property type="evidence" value="ECO:0007669"/>
    <property type="project" value="UniProtKB-KW"/>
</dbReference>
<dbReference type="GO" id="GO:1990817">
    <property type="term" value="F:poly(A) RNA polymerase activity"/>
    <property type="evidence" value="ECO:0007669"/>
    <property type="project" value="UniProtKB-EC"/>
</dbReference>
<dbReference type="GO" id="GO:0006397">
    <property type="term" value="P:mRNA processing"/>
    <property type="evidence" value="ECO:0007669"/>
    <property type="project" value="UniProtKB-KW"/>
</dbReference>
<dbReference type="GO" id="GO:0060212">
    <property type="term" value="P:negative regulation of nuclear-transcribed mRNA poly(A) tail shortening"/>
    <property type="evidence" value="ECO:0000250"/>
    <property type="project" value="UniProtKB"/>
</dbReference>
<dbReference type="GO" id="GO:1905870">
    <property type="term" value="P:positive regulation of 3'-UTR-mediated mRNA stabilization"/>
    <property type="evidence" value="ECO:0000250"/>
    <property type="project" value="UniProtKB"/>
</dbReference>
<dbReference type="GO" id="GO:0009410">
    <property type="term" value="P:response to xenobiotic stimulus"/>
    <property type="evidence" value="ECO:0007669"/>
    <property type="project" value="Ensembl"/>
</dbReference>
<dbReference type="CDD" id="cd05402">
    <property type="entry name" value="NT_PAP_TUTase"/>
    <property type="match status" value="1"/>
</dbReference>
<dbReference type="FunFam" id="3.30.460.10:FF:000006">
    <property type="entry name" value="non-canonical poly(A) RNA polymerase PAPD5"/>
    <property type="match status" value="1"/>
</dbReference>
<dbReference type="FunFam" id="1.10.1410.10:FF:000003">
    <property type="entry name" value="non-canonical poly(A) RNA polymerase PAPD7"/>
    <property type="match status" value="1"/>
</dbReference>
<dbReference type="Gene3D" id="1.10.1410.10">
    <property type="match status" value="1"/>
</dbReference>
<dbReference type="Gene3D" id="3.30.460.10">
    <property type="entry name" value="Beta Polymerase, domain 2"/>
    <property type="match status" value="1"/>
</dbReference>
<dbReference type="InterPro" id="IPR054708">
    <property type="entry name" value="MTPAP-like_central"/>
</dbReference>
<dbReference type="InterPro" id="IPR043519">
    <property type="entry name" value="NT_sf"/>
</dbReference>
<dbReference type="InterPro" id="IPR002058">
    <property type="entry name" value="PAP_assoc"/>
</dbReference>
<dbReference type="InterPro" id="IPR045862">
    <property type="entry name" value="Trf4-like"/>
</dbReference>
<dbReference type="PANTHER" id="PTHR23092">
    <property type="entry name" value="POLY(A) RNA POLYMERASE"/>
    <property type="match status" value="1"/>
</dbReference>
<dbReference type="PANTHER" id="PTHR23092:SF24">
    <property type="entry name" value="TERMINAL NUCLEOTIDYLTRANSFERASE 4A"/>
    <property type="match status" value="1"/>
</dbReference>
<dbReference type="Pfam" id="PF22600">
    <property type="entry name" value="MTPAP-like_central"/>
    <property type="match status" value="1"/>
</dbReference>
<dbReference type="Pfam" id="PF03828">
    <property type="entry name" value="PAP_assoc"/>
    <property type="match status" value="1"/>
</dbReference>
<dbReference type="SUPFAM" id="SSF81301">
    <property type="entry name" value="Nucleotidyltransferase"/>
    <property type="match status" value="1"/>
</dbReference>
<dbReference type="SUPFAM" id="SSF81631">
    <property type="entry name" value="PAP/OAS1 substrate-binding domain"/>
    <property type="match status" value="1"/>
</dbReference>
<evidence type="ECO:0000250" key="1"/>
<evidence type="ECO:0000250" key="2">
    <source>
        <dbReference type="UniProtKB" id="O13833"/>
    </source>
</evidence>
<evidence type="ECO:0000250" key="3">
    <source>
        <dbReference type="UniProtKB" id="Q5XG87"/>
    </source>
</evidence>
<evidence type="ECO:0000250" key="4">
    <source>
        <dbReference type="UniProtKB" id="Q8NDF8"/>
    </source>
</evidence>
<evidence type="ECO:0000255" key="5"/>
<evidence type="ECO:0000256" key="6">
    <source>
        <dbReference type="SAM" id="MobiDB-lite"/>
    </source>
</evidence>
<evidence type="ECO:0000305" key="7"/>
<evidence type="ECO:0000312" key="8">
    <source>
        <dbReference type="MGI" id="MGI:2682295"/>
    </source>
</evidence>
<evidence type="ECO:0000312" key="9">
    <source>
        <dbReference type="Proteomes" id="UP000000589"/>
    </source>
</evidence>